<gene>
    <name evidence="1" type="primary">pyrB</name>
    <name type="ordered locus">Cgl1612</name>
    <name type="ordered locus">cg1816</name>
</gene>
<sequence length="312" mass="33894">MKHLLSISDLSKDEIVGLLDEADRFKEVLEGREVKKLPTLRGRTIFTLFYENSTRTRSSFETAGKWMSADVINISASSSSVKKGESLKDTGLTLSAIGADAIIMRHPASGAAQQLAQFVAPGGNGPSVINAGDGSHQHPTQALLDALTIRQRTGRIEGLKVVIVGDCLHSRVVRSNVDLLSTLGAEVVLVAPPTLLPIGVENWPVRFSYDMDAEIADADVVMMLRVQQERMQGGFFPSHREYATLYGMSKEREARLKDSAIIMHPGPMLRGMEINFQVADAPRTAVLQQVSNGVHMRMAILFALVAGSDATI</sequence>
<evidence type="ECO:0000255" key="1">
    <source>
        <dbReference type="HAMAP-Rule" id="MF_00001"/>
    </source>
</evidence>
<feature type="chain" id="PRO_0000113123" description="Aspartate carbamoyltransferase catalytic subunit">
    <location>
        <begin position="1"/>
        <end position="312"/>
    </location>
</feature>
<feature type="binding site" evidence="1">
    <location>
        <position position="55"/>
    </location>
    <ligand>
        <name>carbamoyl phosphate</name>
        <dbReference type="ChEBI" id="CHEBI:58228"/>
    </ligand>
</feature>
<feature type="binding site" evidence="1">
    <location>
        <position position="56"/>
    </location>
    <ligand>
        <name>carbamoyl phosphate</name>
        <dbReference type="ChEBI" id="CHEBI:58228"/>
    </ligand>
</feature>
<feature type="binding site" evidence="1">
    <location>
        <position position="83"/>
    </location>
    <ligand>
        <name>L-aspartate</name>
        <dbReference type="ChEBI" id="CHEBI:29991"/>
    </ligand>
</feature>
<feature type="binding site" evidence="1">
    <location>
        <position position="105"/>
    </location>
    <ligand>
        <name>carbamoyl phosphate</name>
        <dbReference type="ChEBI" id="CHEBI:58228"/>
    </ligand>
</feature>
<feature type="binding site" evidence="1">
    <location>
        <position position="138"/>
    </location>
    <ligand>
        <name>carbamoyl phosphate</name>
        <dbReference type="ChEBI" id="CHEBI:58228"/>
    </ligand>
</feature>
<feature type="binding site" evidence="1">
    <location>
        <position position="141"/>
    </location>
    <ligand>
        <name>carbamoyl phosphate</name>
        <dbReference type="ChEBI" id="CHEBI:58228"/>
    </ligand>
</feature>
<feature type="binding site" evidence="1">
    <location>
        <position position="171"/>
    </location>
    <ligand>
        <name>L-aspartate</name>
        <dbReference type="ChEBI" id="CHEBI:29991"/>
    </ligand>
</feature>
<feature type="binding site" evidence="1">
    <location>
        <position position="225"/>
    </location>
    <ligand>
        <name>L-aspartate</name>
        <dbReference type="ChEBI" id="CHEBI:29991"/>
    </ligand>
</feature>
<feature type="binding site" evidence="1">
    <location>
        <position position="266"/>
    </location>
    <ligand>
        <name>carbamoyl phosphate</name>
        <dbReference type="ChEBI" id="CHEBI:58228"/>
    </ligand>
</feature>
<feature type="binding site" evidence="1">
    <location>
        <position position="267"/>
    </location>
    <ligand>
        <name>carbamoyl phosphate</name>
        <dbReference type="ChEBI" id="CHEBI:58228"/>
    </ligand>
</feature>
<name>PYRB_CORGL</name>
<accession>Q8NQ38</accession>
<reference key="1">
    <citation type="journal article" date="2003" name="Appl. Microbiol. Biotechnol.">
        <title>The Corynebacterium glutamicum genome: features and impacts on biotechnological processes.</title>
        <authorList>
            <person name="Ikeda M."/>
            <person name="Nakagawa S."/>
        </authorList>
    </citation>
    <scope>NUCLEOTIDE SEQUENCE [LARGE SCALE GENOMIC DNA]</scope>
    <source>
        <strain>ATCC 13032 / DSM 20300 / JCM 1318 / BCRC 11384 / CCUG 27702 / LMG 3730 / NBRC 12168 / NCIMB 10025 / NRRL B-2784 / 534</strain>
    </source>
</reference>
<reference key="2">
    <citation type="journal article" date="2003" name="J. Biotechnol.">
        <title>The complete Corynebacterium glutamicum ATCC 13032 genome sequence and its impact on the production of L-aspartate-derived amino acids and vitamins.</title>
        <authorList>
            <person name="Kalinowski J."/>
            <person name="Bathe B."/>
            <person name="Bartels D."/>
            <person name="Bischoff N."/>
            <person name="Bott M."/>
            <person name="Burkovski A."/>
            <person name="Dusch N."/>
            <person name="Eggeling L."/>
            <person name="Eikmanns B.J."/>
            <person name="Gaigalat L."/>
            <person name="Goesmann A."/>
            <person name="Hartmann M."/>
            <person name="Huthmacher K."/>
            <person name="Kraemer R."/>
            <person name="Linke B."/>
            <person name="McHardy A.C."/>
            <person name="Meyer F."/>
            <person name="Moeckel B."/>
            <person name="Pfefferle W."/>
            <person name="Puehler A."/>
            <person name="Rey D.A."/>
            <person name="Rueckert C."/>
            <person name="Rupp O."/>
            <person name="Sahm H."/>
            <person name="Wendisch V.F."/>
            <person name="Wiegraebe I."/>
            <person name="Tauch A."/>
        </authorList>
    </citation>
    <scope>NUCLEOTIDE SEQUENCE [LARGE SCALE GENOMIC DNA]</scope>
    <source>
        <strain>ATCC 13032 / DSM 20300 / JCM 1318 / BCRC 11384 / CCUG 27702 / LMG 3730 / NBRC 12168 / NCIMB 10025 / NRRL B-2784 / 534</strain>
    </source>
</reference>
<organism>
    <name type="scientific">Corynebacterium glutamicum (strain ATCC 13032 / DSM 20300 / JCM 1318 / BCRC 11384 / CCUG 27702 / LMG 3730 / NBRC 12168 / NCIMB 10025 / NRRL B-2784 / 534)</name>
    <dbReference type="NCBI Taxonomy" id="196627"/>
    <lineage>
        <taxon>Bacteria</taxon>
        <taxon>Bacillati</taxon>
        <taxon>Actinomycetota</taxon>
        <taxon>Actinomycetes</taxon>
        <taxon>Mycobacteriales</taxon>
        <taxon>Corynebacteriaceae</taxon>
        <taxon>Corynebacterium</taxon>
    </lineage>
</organism>
<keyword id="KW-0665">Pyrimidine biosynthesis</keyword>
<keyword id="KW-1185">Reference proteome</keyword>
<keyword id="KW-0808">Transferase</keyword>
<protein>
    <recommendedName>
        <fullName evidence="1">Aspartate carbamoyltransferase catalytic subunit</fullName>
        <ecNumber evidence="1">2.1.3.2</ecNumber>
    </recommendedName>
    <alternativeName>
        <fullName evidence="1">Aspartate transcarbamylase</fullName>
        <shortName evidence="1">ATCase</shortName>
    </alternativeName>
</protein>
<comment type="function">
    <text evidence="1">Catalyzes the condensation of carbamoyl phosphate and aspartate to form carbamoyl aspartate and inorganic phosphate, the committed step in the de novo pyrimidine nucleotide biosynthesis pathway.</text>
</comment>
<comment type="catalytic activity">
    <reaction evidence="1">
        <text>carbamoyl phosphate + L-aspartate = N-carbamoyl-L-aspartate + phosphate + H(+)</text>
        <dbReference type="Rhea" id="RHEA:20013"/>
        <dbReference type="ChEBI" id="CHEBI:15378"/>
        <dbReference type="ChEBI" id="CHEBI:29991"/>
        <dbReference type="ChEBI" id="CHEBI:32814"/>
        <dbReference type="ChEBI" id="CHEBI:43474"/>
        <dbReference type="ChEBI" id="CHEBI:58228"/>
        <dbReference type="EC" id="2.1.3.2"/>
    </reaction>
</comment>
<comment type="pathway">
    <text evidence="1">Pyrimidine metabolism; UMP biosynthesis via de novo pathway; (S)-dihydroorotate from bicarbonate: step 2/3.</text>
</comment>
<comment type="subunit">
    <text evidence="1">Heterododecamer (2C3:3R2) of six catalytic PyrB chains organized as two trimers (C3), and six regulatory PyrI chains organized as three dimers (R2).</text>
</comment>
<comment type="similarity">
    <text evidence="1">Belongs to the aspartate/ornithine carbamoyltransferase superfamily. ATCase family.</text>
</comment>
<dbReference type="EC" id="2.1.3.2" evidence="1"/>
<dbReference type="EMBL" id="BA000036">
    <property type="protein sequence ID" value="BAB99005.1"/>
    <property type="molecule type" value="Genomic_DNA"/>
</dbReference>
<dbReference type="EMBL" id="BX927152">
    <property type="protein sequence ID" value="CAF21621.1"/>
    <property type="molecule type" value="Genomic_DNA"/>
</dbReference>
<dbReference type="RefSeq" id="NP_600826.1">
    <property type="nucleotide sequence ID" value="NC_003450.3"/>
</dbReference>
<dbReference type="RefSeq" id="WP_003862210.1">
    <property type="nucleotide sequence ID" value="NC_006958.1"/>
</dbReference>
<dbReference type="SMR" id="Q8NQ38"/>
<dbReference type="STRING" id="196627.cg1816"/>
<dbReference type="KEGG" id="cgb:cg1816"/>
<dbReference type="KEGG" id="cgl:Cgl1612"/>
<dbReference type="PATRIC" id="fig|196627.13.peg.1574"/>
<dbReference type="eggNOG" id="COG0540">
    <property type="taxonomic scope" value="Bacteria"/>
</dbReference>
<dbReference type="HOGENOM" id="CLU_043846_2_0_11"/>
<dbReference type="OrthoDB" id="9774690at2"/>
<dbReference type="BioCyc" id="CORYNE:G18NG-11197-MONOMER"/>
<dbReference type="UniPathway" id="UPA00070">
    <property type="reaction ID" value="UER00116"/>
</dbReference>
<dbReference type="Proteomes" id="UP000000582">
    <property type="component" value="Chromosome"/>
</dbReference>
<dbReference type="Proteomes" id="UP000001009">
    <property type="component" value="Chromosome"/>
</dbReference>
<dbReference type="GO" id="GO:0005829">
    <property type="term" value="C:cytosol"/>
    <property type="evidence" value="ECO:0007669"/>
    <property type="project" value="TreeGrafter"/>
</dbReference>
<dbReference type="GO" id="GO:0016597">
    <property type="term" value="F:amino acid binding"/>
    <property type="evidence" value="ECO:0007669"/>
    <property type="project" value="InterPro"/>
</dbReference>
<dbReference type="GO" id="GO:0004070">
    <property type="term" value="F:aspartate carbamoyltransferase activity"/>
    <property type="evidence" value="ECO:0007669"/>
    <property type="project" value="UniProtKB-UniRule"/>
</dbReference>
<dbReference type="GO" id="GO:0006207">
    <property type="term" value="P:'de novo' pyrimidine nucleobase biosynthetic process"/>
    <property type="evidence" value="ECO:0007669"/>
    <property type="project" value="InterPro"/>
</dbReference>
<dbReference type="GO" id="GO:0044205">
    <property type="term" value="P:'de novo' UMP biosynthetic process"/>
    <property type="evidence" value="ECO:0007669"/>
    <property type="project" value="UniProtKB-UniRule"/>
</dbReference>
<dbReference type="GO" id="GO:0006520">
    <property type="term" value="P:amino acid metabolic process"/>
    <property type="evidence" value="ECO:0007669"/>
    <property type="project" value="InterPro"/>
</dbReference>
<dbReference type="FunFam" id="3.40.50.1370:FF:000007">
    <property type="entry name" value="Aspartate carbamoyltransferase"/>
    <property type="match status" value="1"/>
</dbReference>
<dbReference type="Gene3D" id="3.40.50.1370">
    <property type="entry name" value="Aspartate/ornithine carbamoyltransferase"/>
    <property type="match status" value="2"/>
</dbReference>
<dbReference type="HAMAP" id="MF_00001">
    <property type="entry name" value="Asp_carb_tr"/>
    <property type="match status" value="1"/>
</dbReference>
<dbReference type="InterPro" id="IPR006132">
    <property type="entry name" value="Asp/Orn_carbamoyltranf_P-bd"/>
</dbReference>
<dbReference type="InterPro" id="IPR006130">
    <property type="entry name" value="Asp/Orn_carbamoylTrfase"/>
</dbReference>
<dbReference type="InterPro" id="IPR036901">
    <property type="entry name" value="Asp/Orn_carbamoylTrfase_sf"/>
</dbReference>
<dbReference type="InterPro" id="IPR002082">
    <property type="entry name" value="Asp_carbamoyltransf"/>
</dbReference>
<dbReference type="InterPro" id="IPR006131">
    <property type="entry name" value="Asp_carbamoyltransf_Asp/Orn-bd"/>
</dbReference>
<dbReference type="NCBIfam" id="TIGR00670">
    <property type="entry name" value="asp_carb_tr"/>
    <property type="match status" value="1"/>
</dbReference>
<dbReference type="NCBIfam" id="NF002032">
    <property type="entry name" value="PRK00856.1"/>
    <property type="match status" value="1"/>
</dbReference>
<dbReference type="PANTHER" id="PTHR45753:SF6">
    <property type="entry name" value="ASPARTATE CARBAMOYLTRANSFERASE"/>
    <property type="match status" value="1"/>
</dbReference>
<dbReference type="PANTHER" id="PTHR45753">
    <property type="entry name" value="ORNITHINE CARBAMOYLTRANSFERASE, MITOCHONDRIAL"/>
    <property type="match status" value="1"/>
</dbReference>
<dbReference type="Pfam" id="PF00185">
    <property type="entry name" value="OTCace"/>
    <property type="match status" value="1"/>
</dbReference>
<dbReference type="Pfam" id="PF02729">
    <property type="entry name" value="OTCace_N"/>
    <property type="match status" value="1"/>
</dbReference>
<dbReference type="PRINTS" id="PR00100">
    <property type="entry name" value="AOTCASE"/>
</dbReference>
<dbReference type="PRINTS" id="PR00101">
    <property type="entry name" value="ATCASE"/>
</dbReference>
<dbReference type="SUPFAM" id="SSF53671">
    <property type="entry name" value="Aspartate/ornithine carbamoyltransferase"/>
    <property type="match status" value="1"/>
</dbReference>
<dbReference type="PROSITE" id="PS00097">
    <property type="entry name" value="CARBAMOYLTRANSFERASE"/>
    <property type="match status" value="1"/>
</dbReference>
<proteinExistence type="inferred from homology"/>